<gene>
    <name evidence="1" type="primary">frr</name>
    <name type="ordered locus">BP1422</name>
</gene>
<dbReference type="EMBL" id="BX640415">
    <property type="protein sequence ID" value="CAE41712.1"/>
    <property type="molecule type" value="Genomic_DNA"/>
</dbReference>
<dbReference type="RefSeq" id="NP_880164.1">
    <property type="nucleotide sequence ID" value="NC_002929.2"/>
</dbReference>
<dbReference type="RefSeq" id="WP_003811796.1">
    <property type="nucleotide sequence ID" value="NZ_CP039022.1"/>
</dbReference>
<dbReference type="SMR" id="Q7VYC7"/>
<dbReference type="STRING" id="257313.BP1422"/>
<dbReference type="PaxDb" id="257313-BP1422"/>
<dbReference type="GeneID" id="93203289"/>
<dbReference type="KEGG" id="bpe:BP1422"/>
<dbReference type="PATRIC" id="fig|257313.5.peg.1525"/>
<dbReference type="eggNOG" id="COG0233">
    <property type="taxonomic scope" value="Bacteria"/>
</dbReference>
<dbReference type="HOGENOM" id="CLU_073981_2_0_4"/>
<dbReference type="Proteomes" id="UP000002676">
    <property type="component" value="Chromosome"/>
</dbReference>
<dbReference type="GO" id="GO:0005829">
    <property type="term" value="C:cytosol"/>
    <property type="evidence" value="ECO:0007669"/>
    <property type="project" value="GOC"/>
</dbReference>
<dbReference type="GO" id="GO:0043023">
    <property type="term" value="F:ribosomal large subunit binding"/>
    <property type="evidence" value="ECO:0007669"/>
    <property type="project" value="TreeGrafter"/>
</dbReference>
<dbReference type="GO" id="GO:0002184">
    <property type="term" value="P:cytoplasmic translational termination"/>
    <property type="evidence" value="ECO:0007669"/>
    <property type="project" value="TreeGrafter"/>
</dbReference>
<dbReference type="CDD" id="cd00520">
    <property type="entry name" value="RRF"/>
    <property type="match status" value="1"/>
</dbReference>
<dbReference type="FunFam" id="1.10.132.20:FF:000001">
    <property type="entry name" value="Ribosome-recycling factor"/>
    <property type="match status" value="1"/>
</dbReference>
<dbReference type="FunFam" id="3.30.1360.40:FF:000001">
    <property type="entry name" value="Ribosome-recycling factor"/>
    <property type="match status" value="1"/>
</dbReference>
<dbReference type="Gene3D" id="3.30.1360.40">
    <property type="match status" value="1"/>
</dbReference>
<dbReference type="Gene3D" id="1.10.132.20">
    <property type="entry name" value="Ribosome-recycling factor"/>
    <property type="match status" value="1"/>
</dbReference>
<dbReference type="HAMAP" id="MF_00040">
    <property type="entry name" value="RRF"/>
    <property type="match status" value="1"/>
</dbReference>
<dbReference type="InterPro" id="IPR002661">
    <property type="entry name" value="Ribosome_recyc_fac"/>
</dbReference>
<dbReference type="InterPro" id="IPR023584">
    <property type="entry name" value="Ribosome_recyc_fac_dom"/>
</dbReference>
<dbReference type="InterPro" id="IPR036191">
    <property type="entry name" value="RRF_sf"/>
</dbReference>
<dbReference type="NCBIfam" id="TIGR00496">
    <property type="entry name" value="frr"/>
    <property type="match status" value="1"/>
</dbReference>
<dbReference type="PANTHER" id="PTHR20982:SF3">
    <property type="entry name" value="MITOCHONDRIAL RIBOSOME RECYCLING FACTOR PSEUDO 1"/>
    <property type="match status" value="1"/>
</dbReference>
<dbReference type="PANTHER" id="PTHR20982">
    <property type="entry name" value="RIBOSOME RECYCLING FACTOR"/>
    <property type="match status" value="1"/>
</dbReference>
<dbReference type="Pfam" id="PF01765">
    <property type="entry name" value="RRF"/>
    <property type="match status" value="1"/>
</dbReference>
<dbReference type="SUPFAM" id="SSF55194">
    <property type="entry name" value="Ribosome recycling factor, RRF"/>
    <property type="match status" value="1"/>
</dbReference>
<accession>Q7VYC7</accession>
<sequence length="186" mass="20709">MSVADIRKSAETRMAKSLETLKASLAKIRTGRAHTGILDHVQVEYYGSPVPISQVANVNLVDARTISVQPYEKSMAGPIEKAIRESDLGLNPVSMGETIRVPMPALTEERRRDLTKVVKSEGEDAKVAVRNLRREANEALKKLVKDKEISEDDERRAQDDVQKLTDRAVGDIDKMIVQKEAEIMTV</sequence>
<feature type="chain" id="PRO_0000167423" description="Ribosome-recycling factor">
    <location>
        <begin position="1"/>
        <end position="186"/>
    </location>
</feature>
<comment type="function">
    <text evidence="1">Responsible for the release of ribosomes from messenger RNA at the termination of protein biosynthesis. May increase the efficiency of translation by recycling ribosomes from one round of translation to another.</text>
</comment>
<comment type="subcellular location">
    <subcellularLocation>
        <location evidence="1">Cytoplasm</location>
    </subcellularLocation>
</comment>
<comment type="similarity">
    <text evidence="1">Belongs to the RRF family.</text>
</comment>
<proteinExistence type="inferred from homology"/>
<keyword id="KW-0963">Cytoplasm</keyword>
<keyword id="KW-0648">Protein biosynthesis</keyword>
<keyword id="KW-1185">Reference proteome</keyword>
<name>RRF_BORPE</name>
<protein>
    <recommendedName>
        <fullName evidence="1">Ribosome-recycling factor</fullName>
        <shortName evidence="1">RRF</shortName>
    </recommendedName>
    <alternativeName>
        <fullName evidence="1">Ribosome-releasing factor</fullName>
    </alternativeName>
</protein>
<organism>
    <name type="scientific">Bordetella pertussis (strain Tohama I / ATCC BAA-589 / NCTC 13251)</name>
    <dbReference type="NCBI Taxonomy" id="257313"/>
    <lineage>
        <taxon>Bacteria</taxon>
        <taxon>Pseudomonadati</taxon>
        <taxon>Pseudomonadota</taxon>
        <taxon>Betaproteobacteria</taxon>
        <taxon>Burkholderiales</taxon>
        <taxon>Alcaligenaceae</taxon>
        <taxon>Bordetella</taxon>
    </lineage>
</organism>
<evidence type="ECO:0000255" key="1">
    <source>
        <dbReference type="HAMAP-Rule" id="MF_00040"/>
    </source>
</evidence>
<reference key="1">
    <citation type="journal article" date="2003" name="Nat. Genet.">
        <title>Comparative analysis of the genome sequences of Bordetella pertussis, Bordetella parapertussis and Bordetella bronchiseptica.</title>
        <authorList>
            <person name="Parkhill J."/>
            <person name="Sebaihia M."/>
            <person name="Preston A."/>
            <person name="Murphy L.D."/>
            <person name="Thomson N.R."/>
            <person name="Harris D.E."/>
            <person name="Holden M.T.G."/>
            <person name="Churcher C.M."/>
            <person name="Bentley S.D."/>
            <person name="Mungall K.L."/>
            <person name="Cerdeno-Tarraga A.-M."/>
            <person name="Temple L."/>
            <person name="James K.D."/>
            <person name="Harris B."/>
            <person name="Quail M.A."/>
            <person name="Achtman M."/>
            <person name="Atkin R."/>
            <person name="Baker S."/>
            <person name="Basham D."/>
            <person name="Bason N."/>
            <person name="Cherevach I."/>
            <person name="Chillingworth T."/>
            <person name="Collins M."/>
            <person name="Cronin A."/>
            <person name="Davis P."/>
            <person name="Doggett J."/>
            <person name="Feltwell T."/>
            <person name="Goble A."/>
            <person name="Hamlin N."/>
            <person name="Hauser H."/>
            <person name="Holroyd S."/>
            <person name="Jagels K."/>
            <person name="Leather S."/>
            <person name="Moule S."/>
            <person name="Norberczak H."/>
            <person name="O'Neil S."/>
            <person name="Ormond D."/>
            <person name="Price C."/>
            <person name="Rabbinowitsch E."/>
            <person name="Rutter S."/>
            <person name="Sanders M."/>
            <person name="Saunders D."/>
            <person name="Seeger K."/>
            <person name="Sharp S."/>
            <person name="Simmonds M."/>
            <person name="Skelton J."/>
            <person name="Squares R."/>
            <person name="Squares S."/>
            <person name="Stevens K."/>
            <person name="Unwin L."/>
            <person name="Whitehead S."/>
            <person name="Barrell B.G."/>
            <person name="Maskell D.J."/>
        </authorList>
    </citation>
    <scope>NUCLEOTIDE SEQUENCE [LARGE SCALE GENOMIC DNA]</scope>
    <source>
        <strain>Tohama I / ATCC BAA-589 / NCTC 13251</strain>
    </source>
</reference>